<protein>
    <recommendedName>
        <fullName evidence="1">Geranylgeranylglyceryl phosphate synthase</fullName>
        <shortName evidence="1">GGGP synthase</shortName>
        <shortName evidence="1">GGGPS</shortName>
        <ecNumber evidence="1">2.5.1.41</ecNumber>
    </recommendedName>
    <alternativeName>
        <fullName evidence="1">(S)-3-O-geranylgeranylglyceryl phosphate synthase</fullName>
    </alternativeName>
    <alternativeName>
        <fullName evidence="1">Phosphoglycerol geranylgeranyltransferase</fullName>
    </alternativeName>
</protein>
<keyword id="KW-0963">Cytoplasm</keyword>
<keyword id="KW-0444">Lipid biosynthesis</keyword>
<keyword id="KW-0443">Lipid metabolism</keyword>
<keyword id="KW-0460">Magnesium</keyword>
<keyword id="KW-0479">Metal-binding</keyword>
<keyword id="KW-0594">Phospholipid biosynthesis</keyword>
<keyword id="KW-1208">Phospholipid metabolism</keyword>
<keyword id="KW-1185">Reference proteome</keyword>
<keyword id="KW-0808">Transferase</keyword>
<feature type="chain" id="PRO_1000071333" description="Geranylgeranylglyceryl phosphate synthase">
    <location>
        <begin position="1"/>
        <end position="252"/>
    </location>
</feature>
<feature type="binding site" evidence="1">
    <location>
        <position position="27"/>
    </location>
    <ligand>
        <name>Mg(2+)</name>
        <dbReference type="ChEBI" id="CHEBI:18420"/>
    </ligand>
</feature>
<feature type="binding site" evidence="1">
    <location>
        <position position="57"/>
    </location>
    <ligand>
        <name>Mg(2+)</name>
        <dbReference type="ChEBI" id="CHEBI:18420"/>
    </ligand>
</feature>
<feature type="binding site" evidence="1">
    <location>
        <begin position="175"/>
        <end position="181"/>
    </location>
    <ligand>
        <name>sn-glycerol 1-phosphate</name>
        <dbReference type="ChEBI" id="CHEBI:57685"/>
    </ligand>
</feature>
<feature type="binding site" evidence="1">
    <location>
        <begin position="206"/>
        <end position="207"/>
    </location>
    <ligand>
        <name>sn-glycerol 1-phosphate</name>
        <dbReference type="ChEBI" id="CHEBI:57685"/>
    </ligand>
</feature>
<feature type="binding site" evidence="1">
    <location>
        <begin position="228"/>
        <end position="229"/>
    </location>
    <ligand>
        <name>sn-glycerol 1-phosphate</name>
        <dbReference type="ChEBI" id="CHEBI:57685"/>
    </ligand>
</feature>
<sequence length="252" mass="27259">MRIKGKTAKYLQKLIDEGQPIHFSLIDPDKVKDIQSLSKVASSLFKAGTSAFLIGGTLGVSKEKLDSILSVLQDFSVPKIIFPSNINLISEKADAILFMSLLNSDDLYYVIGAQVSASIIVKTIGLEPIPTGYLIVGHGGTAAHIGRARVVPYDNPELAVAYALAAEYMGMEYLYLEAGSGAPDTVRPEMVKFVSKYSEINLIVGGGIRTPERAVELVKAGAKALVTGNVIETDIERAIKIIEAMQRVYRIE</sequence>
<reference key="1">
    <citation type="journal article" date="2008" name="Appl. Environ. Microbiol.">
        <title>The genome sequence of the metal-mobilizing, extremely thermoacidophilic archaeon Metallosphaera sedula provides insights into bioleaching-associated metabolism.</title>
        <authorList>
            <person name="Auernik K.S."/>
            <person name="Maezato Y."/>
            <person name="Blum P.H."/>
            <person name="Kelly R.M."/>
        </authorList>
    </citation>
    <scope>NUCLEOTIDE SEQUENCE [LARGE SCALE GENOMIC DNA]</scope>
    <source>
        <strain>ATCC 51363 / DSM 5348 / JCM 9185 / NBRC 15509 / TH2</strain>
    </source>
</reference>
<proteinExistence type="inferred from homology"/>
<gene>
    <name type="ordered locus">Msed_2291</name>
</gene>
<accession>A4YJ26</accession>
<organism>
    <name type="scientific">Metallosphaera sedula (strain ATCC 51363 / DSM 5348 / JCM 9185 / NBRC 15509 / TH2)</name>
    <dbReference type="NCBI Taxonomy" id="399549"/>
    <lineage>
        <taxon>Archaea</taxon>
        <taxon>Thermoproteota</taxon>
        <taxon>Thermoprotei</taxon>
        <taxon>Sulfolobales</taxon>
        <taxon>Sulfolobaceae</taxon>
        <taxon>Metallosphaera</taxon>
    </lineage>
</organism>
<comment type="function">
    <text evidence="1">Prenyltransferase that catalyzes the transfer of the geranylgeranyl moiety of geranylgeranyl diphosphate (GGPP) to the C3 hydroxyl of sn-glycerol-1-phosphate (G1P). This reaction is the first ether-bond-formation step in the biosynthesis of archaeal membrane lipids.</text>
</comment>
<comment type="catalytic activity">
    <reaction evidence="1">
        <text>sn-glycerol 1-phosphate + (2E,6E,10E)-geranylgeranyl diphosphate = sn-3-O-(geranylgeranyl)glycerol 1-phosphate + diphosphate</text>
        <dbReference type="Rhea" id="RHEA:23404"/>
        <dbReference type="ChEBI" id="CHEBI:33019"/>
        <dbReference type="ChEBI" id="CHEBI:57677"/>
        <dbReference type="ChEBI" id="CHEBI:57685"/>
        <dbReference type="ChEBI" id="CHEBI:58756"/>
        <dbReference type="EC" id="2.5.1.41"/>
    </reaction>
</comment>
<comment type="cofactor">
    <cofactor evidence="1">
        <name>Mg(2+)</name>
        <dbReference type="ChEBI" id="CHEBI:18420"/>
    </cofactor>
</comment>
<comment type="pathway">
    <text evidence="1">Membrane lipid metabolism; glycerophospholipid metabolism.</text>
</comment>
<comment type="subcellular location">
    <subcellularLocation>
        <location evidence="1">Cytoplasm</location>
    </subcellularLocation>
</comment>
<comment type="similarity">
    <text evidence="1">Belongs to the GGGP/HepGP synthase family. Group II subfamily.</text>
</comment>
<evidence type="ECO:0000255" key="1">
    <source>
        <dbReference type="HAMAP-Rule" id="MF_00112"/>
    </source>
</evidence>
<name>GGGPS_METS5</name>
<dbReference type="EC" id="2.5.1.41" evidence="1"/>
<dbReference type="EMBL" id="CP000682">
    <property type="protein sequence ID" value="ABP96428.1"/>
    <property type="molecule type" value="Genomic_DNA"/>
</dbReference>
<dbReference type="RefSeq" id="WP_012022215.1">
    <property type="nucleotide sequence ID" value="NZ_CP139956.1"/>
</dbReference>
<dbReference type="SMR" id="A4YJ26"/>
<dbReference type="STRING" id="399549.Msed_2291"/>
<dbReference type="KEGG" id="mse:Msed_2291"/>
<dbReference type="eggNOG" id="arCOG01085">
    <property type="taxonomic scope" value="Archaea"/>
</dbReference>
<dbReference type="HOGENOM" id="CLU_068610_0_0_2"/>
<dbReference type="UniPathway" id="UPA00940"/>
<dbReference type="Proteomes" id="UP000000242">
    <property type="component" value="Chromosome"/>
</dbReference>
<dbReference type="GO" id="GO:0005737">
    <property type="term" value="C:cytoplasm"/>
    <property type="evidence" value="ECO:0007669"/>
    <property type="project" value="UniProtKB-SubCell"/>
</dbReference>
<dbReference type="GO" id="GO:0000287">
    <property type="term" value="F:magnesium ion binding"/>
    <property type="evidence" value="ECO:0007669"/>
    <property type="project" value="UniProtKB-UniRule"/>
</dbReference>
<dbReference type="GO" id="GO:0047294">
    <property type="term" value="F:phosphoglycerol geranylgeranyltransferase activity"/>
    <property type="evidence" value="ECO:0007669"/>
    <property type="project" value="UniProtKB-UniRule"/>
</dbReference>
<dbReference type="GO" id="GO:0046474">
    <property type="term" value="P:glycerophospholipid biosynthetic process"/>
    <property type="evidence" value="ECO:0007669"/>
    <property type="project" value="UniProtKB-UniRule"/>
</dbReference>
<dbReference type="CDD" id="cd02812">
    <property type="entry name" value="PcrB_like"/>
    <property type="match status" value="1"/>
</dbReference>
<dbReference type="FunFam" id="3.20.20.390:FF:000001">
    <property type="entry name" value="Heptaprenylglyceryl phosphate synthase"/>
    <property type="match status" value="1"/>
</dbReference>
<dbReference type="Gene3D" id="3.20.20.390">
    <property type="entry name" value="FMN-linked oxidoreductases"/>
    <property type="match status" value="1"/>
</dbReference>
<dbReference type="HAMAP" id="MF_00112">
    <property type="entry name" value="GGGP_HepGP_synthase"/>
    <property type="match status" value="1"/>
</dbReference>
<dbReference type="InterPro" id="IPR039074">
    <property type="entry name" value="GGGP/HepGP_synthase_I"/>
</dbReference>
<dbReference type="InterPro" id="IPR038597">
    <property type="entry name" value="GGGP/HepGP_synthase_sf"/>
</dbReference>
<dbReference type="InterPro" id="IPR008205">
    <property type="entry name" value="GGGP_HepGP_synthase"/>
</dbReference>
<dbReference type="InterPro" id="IPR010946">
    <property type="entry name" value="GGGP_synth"/>
</dbReference>
<dbReference type="NCBIfam" id="TIGR01769">
    <property type="entry name" value="GGGP"/>
    <property type="match status" value="1"/>
</dbReference>
<dbReference type="NCBIfam" id="TIGR01768">
    <property type="entry name" value="GGGP-family"/>
    <property type="match status" value="1"/>
</dbReference>
<dbReference type="NCBIfam" id="NF003198">
    <property type="entry name" value="PRK04169.1-2"/>
    <property type="match status" value="1"/>
</dbReference>
<dbReference type="NCBIfam" id="NF003202">
    <property type="entry name" value="PRK04169.1-6"/>
    <property type="match status" value="1"/>
</dbReference>
<dbReference type="PANTHER" id="PTHR40029">
    <property type="match status" value="1"/>
</dbReference>
<dbReference type="PANTHER" id="PTHR40029:SF2">
    <property type="entry name" value="HEPTAPRENYLGLYCERYL PHOSPHATE SYNTHASE"/>
    <property type="match status" value="1"/>
</dbReference>
<dbReference type="Pfam" id="PF01884">
    <property type="entry name" value="PcrB"/>
    <property type="match status" value="1"/>
</dbReference>
<dbReference type="SUPFAM" id="SSF51395">
    <property type="entry name" value="FMN-linked oxidoreductases"/>
    <property type="match status" value="1"/>
</dbReference>